<evidence type="ECO:0000255" key="1">
    <source>
        <dbReference type="HAMAP-Rule" id="MF_00660"/>
    </source>
</evidence>
<evidence type="ECO:0000255" key="2">
    <source>
        <dbReference type="PROSITE-ProRule" id="PRU01266"/>
    </source>
</evidence>
<comment type="function">
    <text evidence="1">Catalyzes the cross-linking of a glutamate residue and a tyrosine residue in the PqqA protein as part of the biosynthesis of pyrroloquinoline quinone (PQQ).</text>
</comment>
<comment type="catalytic activity">
    <reaction evidence="1">
        <text>[PQQ precursor protein] + S-adenosyl-L-methionine = E-Y cross-linked-[PQQ precursor protein] + 5'-deoxyadenosine + L-methionine + H(+)</text>
        <dbReference type="Rhea" id="RHEA:56836"/>
        <dbReference type="Rhea" id="RHEA-COMP:14800"/>
        <dbReference type="Rhea" id="RHEA-COMP:14801"/>
        <dbReference type="ChEBI" id="CHEBI:15378"/>
        <dbReference type="ChEBI" id="CHEBI:17319"/>
        <dbReference type="ChEBI" id="CHEBI:57844"/>
        <dbReference type="ChEBI" id="CHEBI:59789"/>
        <dbReference type="ChEBI" id="CHEBI:141026"/>
        <dbReference type="ChEBI" id="CHEBI:141027"/>
        <dbReference type="EC" id="1.21.98.4"/>
    </reaction>
</comment>
<comment type="cofactor">
    <cofactor evidence="1">
        <name>[4Fe-4S] cluster</name>
        <dbReference type="ChEBI" id="CHEBI:49883"/>
    </cofactor>
    <text evidence="1">Binds 1 [4Fe-4S] cluster. The cluster is coordinated with 3 cysteines and an exchangeable S-adenosyl-L-methionine.</text>
</comment>
<comment type="pathway">
    <text evidence="1">Cofactor biosynthesis; pyrroloquinoline quinone biosynthesis.</text>
</comment>
<comment type="subunit">
    <text evidence="1">Interacts with PqqD. The interaction is necessary for activity of PqqE.</text>
</comment>
<comment type="similarity">
    <text evidence="1">Belongs to the radical SAM superfamily. PqqE family.</text>
</comment>
<reference key="1">
    <citation type="submission" date="2007-05" db="EMBL/GenBank/DDBJ databases">
        <title>Complete sequence of Pseudomonas putida F1.</title>
        <authorList>
            <consortium name="US DOE Joint Genome Institute"/>
            <person name="Copeland A."/>
            <person name="Lucas S."/>
            <person name="Lapidus A."/>
            <person name="Barry K."/>
            <person name="Detter J.C."/>
            <person name="Glavina del Rio T."/>
            <person name="Hammon N."/>
            <person name="Israni S."/>
            <person name="Dalin E."/>
            <person name="Tice H."/>
            <person name="Pitluck S."/>
            <person name="Chain P."/>
            <person name="Malfatti S."/>
            <person name="Shin M."/>
            <person name="Vergez L."/>
            <person name="Schmutz J."/>
            <person name="Larimer F."/>
            <person name="Land M."/>
            <person name="Hauser L."/>
            <person name="Kyrpides N."/>
            <person name="Lykidis A."/>
            <person name="Parales R."/>
            <person name="Richardson P."/>
        </authorList>
    </citation>
    <scope>NUCLEOTIDE SEQUENCE [LARGE SCALE GENOMIC DNA]</scope>
    <source>
        <strain>ATCC 700007 / DSM 6899 / JCM 31910 / BCRC 17059 / LMG 24140 / F1</strain>
    </source>
</reference>
<proteinExistence type="inferred from homology"/>
<gene>
    <name evidence="1" type="primary">pqqE</name>
    <name type="ordered locus">Pput_0401</name>
</gene>
<accession>A5VXG4</accession>
<dbReference type="EC" id="1.21.98.4" evidence="1"/>
<dbReference type="EMBL" id="CP000712">
    <property type="protein sequence ID" value="ABQ76574.1"/>
    <property type="molecule type" value="Genomic_DNA"/>
</dbReference>
<dbReference type="SMR" id="A5VXG4"/>
<dbReference type="KEGG" id="ppf:Pput_0401"/>
<dbReference type="eggNOG" id="COG0535">
    <property type="taxonomic scope" value="Bacteria"/>
</dbReference>
<dbReference type="HOGENOM" id="CLU_009273_4_7_6"/>
<dbReference type="UniPathway" id="UPA00539"/>
<dbReference type="GO" id="GO:0051539">
    <property type="term" value="F:4 iron, 4 sulfur cluster binding"/>
    <property type="evidence" value="ECO:0007669"/>
    <property type="project" value="UniProtKB-KW"/>
</dbReference>
<dbReference type="GO" id="GO:0009975">
    <property type="term" value="F:cyclase activity"/>
    <property type="evidence" value="ECO:0007669"/>
    <property type="project" value="UniProtKB-UniRule"/>
</dbReference>
<dbReference type="GO" id="GO:0005506">
    <property type="term" value="F:iron ion binding"/>
    <property type="evidence" value="ECO:0007669"/>
    <property type="project" value="UniProtKB-UniRule"/>
</dbReference>
<dbReference type="GO" id="GO:0016491">
    <property type="term" value="F:oxidoreductase activity"/>
    <property type="evidence" value="ECO:0007669"/>
    <property type="project" value="UniProtKB-KW"/>
</dbReference>
<dbReference type="GO" id="GO:1904047">
    <property type="term" value="F:S-adenosyl-L-methionine binding"/>
    <property type="evidence" value="ECO:0007669"/>
    <property type="project" value="UniProtKB-UniRule"/>
</dbReference>
<dbReference type="GO" id="GO:0018189">
    <property type="term" value="P:pyrroloquinoline quinone biosynthetic process"/>
    <property type="evidence" value="ECO:0007669"/>
    <property type="project" value="UniProtKB-UniRule"/>
</dbReference>
<dbReference type="CDD" id="cd01335">
    <property type="entry name" value="Radical_SAM"/>
    <property type="match status" value="1"/>
</dbReference>
<dbReference type="CDD" id="cd21119">
    <property type="entry name" value="SPASM_PqqE"/>
    <property type="match status" value="1"/>
</dbReference>
<dbReference type="Gene3D" id="3.20.20.70">
    <property type="entry name" value="Aldolase class I"/>
    <property type="match status" value="1"/>
</dbReference>
<dbReference type="HAMAP" id="MF_00660">
    <property type="entry name" value="PqqE"/>
    <property type="match status" value="1"/>
</dbReference>
<dbReference type="InterPro" id="IPR023885">
    <property type="entry name" value="4Fe4S-binding_SPASM_dom"/>
</dbReference>
<dbReference type="InterPro" id="IPR013785">
    <property type="entry name" value="Aldolase_TIM"/>
</dbReference>
<dbReference type="InterPro" id="IPR006638">
    <property type="entry name" value="Elp3/MiaA/NifB-like_rSAM"/>
</dbReference>
<dbReference type="InterPro" id="IPR000385">
    <property type="entry name" value="MoaA_NifB_PqqE_Fe-S-bd_CS"/>
</dbReference>
<dbReference type="InterPro" id="IPR011843">
    <property type="entry name" value="PQQ_synth_PqqE_bac"/>
</dbReference>
<dbReference type="InterPro" id="IPR017200">
    <property type="entry name" value="PqqE-like"/>
</dbReference>
<dbReference type="InterPro" id="IPR050377">
    <property type="entry name" value="Radical_SAM_PqqE_MftC-like"/>
</dbReference>
<dbReference type="InterPro" id="IPR007197">
    <property type="entry name" value="rSAM"/>
</dbReference>
<dbReference type="NCBIfam" id="TIGR02109">
    <property type="entry name" value="PQQ_syn_pqqE"/>
    <property type="match status" value="1"/>
</dbReference>
<dbReference type="NCBIfam" id="TIGR04085">
    <property type="entry name" value="rSAM_more_4Fe4S"/>
    <property type="match status" value="1"/>
</dbReference>
<dbReference type="PANTHER" id="PTHR11228:SF7">
    <property type="entry name" value="PQQA PEPTIDE CYCLASE"/>
    <property type="match status" value="1"/>
</dbReference>
<dbReference type="PANTHER" id="PTHR11228">
    <property type="entry name" value="RADICAL SAM DOMAIN PROTEIN"/>
    <property type="match status" value="1"/>
</dbReference>
<dbReference type="Pfam" id="PF13353">
    <property type="entry name" value="Fer4_12"/>
    <property type="match status" value="1"/>
</dbReference>
<dbReference type="Pfam" id="PF04055">
    <property type="entry name" value="Radical_SAM"/>
    <property type="match status" value="1"/>
</dbReference>
<dbReference type="Pfam" id="PF13186">
    <property type="entry name" value="SPASM"/>
    <property type="match status" value="1"/>
</dbReference>
<dbReference type="PIRSF" id="PIRSF037420">
    <property type="entry name" value="PQQ_syn_pqqE"/>
    <property type="match status" value="1"/>
</dbReference>
<dbReference type="SFLD" id="SFLDF00280">
    <property type="entry name" value="coenzyme_PQQ_synthesis_protein"/>
    <property type="match status" value="1"/>
</dbReference>
<dbReference type="SFLD" id="SFLDG01067">
    <property type="entry name" value="SPASM/twitch_domain_containing"/>
    <property type="match status" value="1"/>
</dbReference>
<dbReference type="SMART" id="SM00729">
    <property type="entry name" value="Elp3"/>
    <property type="match status" value="1"/>
</dbReference>
<dbReference type="SUPFAM" id="SSF102114">
    <property type="entry name" value="Radical SAM enzymes"/>
    <property type="match status" value="1"/>
</dbReference>
<dbReference type="PROSITE" id="PS01305">
    <property type="entry name" value="MOAA_NIFB_PQQE"/>
    <property type="match status" value="1"/>
</dbReference>
<dbReference type="PROSITE" id="PS51918">
    <property type="entry name" value="RADICAL_SAM"/>
    <property type="match status" value="1"/>
</dbReference>
<name>PQQE_PSEP1</name>
<feature type="chain" id="PRO_1000061917" description="PqqA peptide cyclase">
    <location>
        <begin position="1"/>
        <end position="376"/>
    </location>
</feature>
<feature type="domain" description="Radical SAM core" evidence="2">
    <location>
        <begin position="7"/>
        <end position="222"/>
    </location>
</feature>
<feature type="binding site" evidence="1">
    <location>
        <position position="21"/>
    </location>
    <ligand>
        <name>[4Fe-4S] cluster</name>
        <dbReference type="ChEBI" id="CHEBI:49883"/>
        <note>4Fe-4S-S-AdoMet</note>
    </ligand>
</feature>
<feature type="binding site" evidence="1">
    <location>
        <position position="25"/>
    </location>
    <ligand>
        <name>[4Fe-4S] cluster</name>
        <dbReference type="ChEBI" id="CHEBI:49883"/>
        <note>4Fe-4S-S-AdoMet</note>
    </ligand>
</feature>
<feature type="binding site" evidence="1">
    <location>
        <position position="28"/>
    </location>
    <ligand>
        <name>[4Fe-4S] cluster</name>
        <dbReference type="ChEBI" id="CHEBI:49883"/>
        <note>4Fe-4S-S-AdoMet</note>
    </ligand>
</feature>
<protein>
    <recommendedName>
        <fullName evidence="1">PqqA peptide cyclase</fullName>
        <ecNumber evidence="1">1.21.98.4</ecNumber>
    </recommendedName>
    <alternativeName>
        <fullName evidence="1">Coenzyme PQQ synthesis protein E</fullName>
    </alternativeName>
    <alternativeName>
        <fullName evidence="1">Pyrroloquinoline quinone biosynthesis protein E</fullName>
    </alternativeName>
</protein>
<sequence>MPPTPEVGLPLWLLAELTYRCPLQCPYCSNPLDFAAQGQELSTEQWFKVMAEAREMGAAQIGFSGGEPLVRQDLAQLIAEARRLGYYTNLITSGIGLNEARIADFKKAGLDHIQISFQASDEQVNNLLAGSKKAFAQKLEMARAVKAHGYPMVLNFVTHRHNIDKIDRIIELCIALEADFVELATCQFYGWAHLNRLGLLPTRAQLERAERITNEYRDKLKAEGNPCKLIFVTPDYYEERPKACMNGWGNLFLTITPDGTALPCHGARQLPVQFPNVRDHDLHHIWYESFGFNRFRGYEWMREPCRSCDEKEKDFGGCRCQAFMLTGDASNADPVCAKSTEHGIILKAREEAETAQLAIEQMTFRNDRNSRVIARG</sequence>
<organism>
    <name type="scientific">Pseudomonas putida (strain ATCC 700007 / DSM 6899 / JCM 31910 / BCRC 17059 / LMG 24140 / F1)</name>
    <dbReference type="NCBI Taxonomy" id="351746"/>
    <lineage>
        <taxon>Bacteria</taxon>
        <taxon>Pseudomonadati</taxon>
        <taxon>Pseudomonadota</taxon>
        <taxon>Gammaproteobacteria</taxon>
        <taxon>Pseudomonadales</taxon>
        <taxon>Pseudomonadaceae</taxon>
        <taxon>Pseudomonas</taxon>
    </lineage>
</organism>
<keyword id="KW-0004">4Fe-4S</keyword>
<keyword id="KW-0408">Iron</keyword>
<keyword id="KW-0411">Iron-sulfur</keyword>
<keyword id="KW-0479">Metal-binding</keyword>
<keyword id="KW-0560">Oxidoreductase</keyword>
<keyword id="KW-0884">PQQ biosynthesis</keyword>
<keyword id="KW-0949">S-adenosyl-L-methionine</keyword>